<reference key="1">
    <citation type="journal article" date="2005" name="Nature">
        <title>The genome of the social amoeba Dictyostelium discoideum.</title>
        <authorList>
            <person name="Eichinger L."/>
            <person name="Pachebat J.A."/>
            <person name="Gloeckner G."/>
            <person name="Rajandream M.A."/>
            <person name="Sucgang R."/>
            <person name="Berriman M."/>
            <person name="Song J."/>
            <person name="Olsen R."/>
            <person name="Szafranski K."/>
            <person name="Xu Q."/>
            <person name="Tunggal B."/>
            <person name="Kummerfeld S."/>
            <person name="Madera M."/>
            <person name="Konfortov B.A."/>
            <person name="Rivero F."/>
            <person name="Bankier A.T."/>
            <person name="Lehmann R."/>
            <person name="Hamlin N."/>
            <person name="Davies R."/>
            <person name="Gaudet P."/>
            <person name="Fey P."/>
            <person name="Pilcher K."/>
            <person name="Chen G."/>
            <person name="Saunders D."/>
            <person name="Sodergren E.J."/>
            <person name="Davis P."/>
            <person name="Kerhornou A."/>
            <person name="Nie X."/>
            <person name="Hall N."/>
            <person name="Anjard C."/>
            <person name="Hemphill L."/>
            <person name="Bason N."/>
            <person name="Farbrother P."/>
            <person name="Desany B."/>
            <person name="Just E."/>
            <person name="Morio T."/>
            <person name="Rost R."/>
            <person name="Churcher C.M."/>
            <person name="Cooper J."/>
            <person name="Haydock S."/>
            <person name="van Driessche N."/>
            <person name="Cronin A."/>
            <person name="Goodhead I."/>
            <person name="Muzny D.M."/>
            <person name="Mourier T."/>
            <person name="Pain A."/>
            <person name="Lu M."/>
            <person name="Harper D."/>
            <person name="Lindsay R."/>
            <person name="Hauser H."/>
            <person name="James K.D."/>
            <person name="Quiles M."/>
            <person name="Madan Babu M."/>
            <person name="Saito T."/>
            <person name="Buchrieser C."/>
            <person name="Wardroper A."/>
            <person name="Felder M."/>
            <person name="Thangavelu M."/>
            <person name="Johnson D."/>
            <person name="Knights A."/>
            <person name="Loulseged H."/>
            <person name="Mungall K.L."/>
            <person name="Oliver K."/>
            <person name="Price C."/>
            <person name="Quail M.A."/>
            <person name="Urushihara H."/>
            <person name="Hernandez J."/>
            <person name="Rabbinowitsch E."/>
            <person name="Steffen D."/>
            <person name="Sanders M."/>
            <person name="Ma J."/>
            <person name="Kohara Y."/>
            <person name="Sharp S."/>
            <person name="Simmonds M.N."/>
            <person name="Spiegler S."/>
            <person name="Tivey A."/>
            <person name="Sugano S."/>
            <person name="White B."/>
            <person name="Walker D."/>
            <person name="Woodward J.R."/>
            <person name="Winckler T."/>
            <person name="Tanaka Y."/>
            <person name="Shaulsky G."/>
            <person name="Schleicher M."/>
            <person name="Weinstock G.M."/>
            <person name="Rosenthal A."/>
            <person name="Cox E.C."/>
            <person name="Chisholm R.L."/>
            <person name="Gibbs R.A."/>
            <person name="Loomis W.F."/>
            <person name="Platzer M."/>
            <person name="Kay R.R."/>
            <person name="Williams J.G."/>
            <person name="Dear P.H."/>
            <person name="Noegel A.A."/>
            <person name="Barrell B.G."/>
            <person name="Kuspa A."/>
        </authorList>
    </citation>
    <scope>NUCLEOTIDE SEQUENCE [LARGE SCALE GENOMIC DNA]</scope>
    <source>
        <strain>AX4</strain>
    </source>
</reference>
<sequence length="190" mass="22245">MSNYLEFFKICGKLKTLKRTGWVNHGVELPESVSDHMYRMAMMGMCLDKKELIGEDGKEIDKMKIIKMALVHDLGESLVGDFTPHDKITKEEKYQLEKNAIIEITNTLSGEVGKEIFDLWQEYEDCKTNEALLVKDFDKFEMILQAYEYEKQPHQLENKIKLQSFFDSTRGKFHHPLFKSLALQLESDRK</sequence>
<comment type="function">
    <text evidence="1">Catalyzes the dephosphorylation of the nucleoside 5'-monophosphates deoxyadenosine monophosphate (dAMP), deoxycytidine monophosphate (dCMP), deoxyguanosine monophosphate (dGMP) and deoxythymidine monophosphate (dTMP).</text>
</comment>
<comment type="catalytic activity">
    <reaction evidence="1">
        <text>a 2'-deoxyribonucleoside 5'-phosphate + H2O = a 2'-deoxyribonucleoside + phosphate</text>
        <dbReference type="Rhea" id="RHEA:36167"/>
        <dbReference type="ChEBI" id="CHEBI:15377"/>
        <dbReference type="ChEBI" id="CHEBI:18274"/>
        <dbReference type="ChEBI" id="CHEBI:43474"/>
        <dbReference type="ChEBI" id="CHEBI:65317"/>
        <dbReference type="EC" id="3.1.3.89"/>
    </reaction>
</comment>
<comment type="cofactor">
    <cofactor evidence="1">
        <name>Mn(2+)</name>
        <dbReference type="ChEBI" id="CHEBI:29035"/>
    </cofactor>
    <cofactor evidence="1">
        <name>Co(2+)</name>
        <dbReference type="ChEBI" id="CHEBI:48828"/>
    </cofactor>
    <cofactor evidence="1">
        <name>Mg(2+)</name>
        <dbReference type="ChEBI" id="CHEBI:18420"/>
    </cofactor>
    <text evidence="1 2">Binds 2 divalent metal cations (By similarity). Shows activity with Mn(2+), Co(2+) and Mg(2+) but shows no activity with Zn(2+) (By similarity).</text>
</comment>
<comment type="subunit">
    <text evidence="1">Homodimer.</text>
</comment>
<comment type="similarity">
    <text evidence="4">Belongs to the HDDC2 family.</text>
</comment>
<gene>
    <name type="primary">hddc2</name>
    <name type="ORF">DDB_G0290795</name>
</gene>
<keyword id="KW-0170">Cobalt</keyword>
<keyword id="KW-0378">Hydrolase</keyword>
<keyword id="KW-0460">Magnesium</keyword>
<keyword id="KW-0464">Manganese</keyword>
<keyword id="KW-0479">Metal-binding</keyword>
<keyword id="KW-1185">Reference proteome</keyword>
<feature type="chain" id="PRO_0000327688" description="5'-deoxynucleotidase HDDC2">
    <location>
        <begin position="1"/>
        <end position="190"/>
    </location>
</feature>
<feature type="domain" description="HD" evidence="3">
    <location>
        <begin position="33"/>
        <end position="143"/>
    </location>
</feature>
<feature type="binding site" evidence="2">
    <location>
        <position position="36"/>
    </location>
    <ligand>
        <name>a divalent metal cation</name>
        <dbReference type="ChEBI" id="CHEBI:60240"/>
        <label>1</label>
    </ligand>
</feature>
<feature type="binding site" evidence="2">
    <location>
        <position position="72"/>
    </location>
    <ligand>
        <name>a divalent metal cation</name>
        <dbReference type="ChEBI" id="CHEBI:60240"/>
        <label>1</label>
    </ligand>
</feature>
<feature type="binding site" evidence="2">
    <location>
        <position position="73"/>
    </location>
    <ligand>
        <name>a divalent metal cation</name>
        <dbReference type="ChEBI" id="CHEBI:60240"/>
        <label>1</label>
    </ligand>
</feature>
<feature type="binding site" evidence="2">
    <location>
        <position position="76"/>
    </location>
    <ligand>
        <name>a divalent metal cation</name>
        <dbReference type="ChEBI" id="CHEBI:60240"/>
        <label>2</label>
    </ligand>
</feature>
<feature type="binding site" evidence="2">
    <location>
        <position position="81"/>
    </location>
    <ligand>
        <name>a divalent metal cation</name>
        <dbReference type="ChEBI" id="CHEBI:60240"/>
        <label>2</label>
    </ligand>
</feature>
<feature type="binding site" evidence="2">
    <location>
        <position position="138"/>
    </location>
    <ligand>
        <name>a divalent metal cation</name>
        <dbReference type="ChEBI" id="CHEBI:60240"/>
        <label>1</label>
    </ligand>
</feature>
<accession>Q54FK1</accession>
<evidence type="ECO:0000250" key="1">
    <source>
        <dbReference type="UniProtKB" id="P53144"/>
    </source>
</evidence>
<evidence type="ECO:0000250" key="2">
    <source>
        <dbReference type="UniProtKB" id="Q7Z4H3"/>
    </source>
</evidence>
<evidence type="ECO:0000255" key="3">
    <source>
        <dbReference type="PROSITE-ProRule" id="PRU01175"/>
    </source>
</evidence>
<evidence type="ECO:0000305" key="4"/>
<name>HDDC2_DICDI</name>
<organism>
    <name type="scientific">Dictyostelium discoideum</name>
    <name type="common">Social amoeba</name>
    <dbReference type="NCBI Taxonomy" id="44689"/>
    <lineage>
        <taxon>Eukaryota</taxon>
        <taxon>Amoebozoa</taxon>
        <taxon>Evosea</taxon>
        <taxon>Eumycetozoa</taxon>
        <taxon>Dictyostelia</taxon>
        <taxon>Dictyosteliales</taxon>
        <taxon>Dictyosteliaceae</taxon>
        <taxon>Dictyostelium</taxon>
    </lineage>
</organism>
<protein>
    <recommendedName>
        <fullName>5'-deoxynucleotidase HDDC2</fullName>
        <ecNumber evidence="1">3.1.3.89</ecNumber>
    </recommendedName>
    <alternativeName>
        <fullName>HD domain-containing protein 2 homolog</fullName>
    </alternativeName>
</protein>
<dbReference type="EC" id="3.1.3.89" evidence="1"/>
<dbReference type="EMBL" id="AAFI02000171">
    <property type="protein sequence ID" value="EAL62031.1"/>
    <property type="molecule type" value="Genomic_DNA"/>
</dbReference>
<dbReference type="RefSeq" id="XP_635539.1">
    <property type="nucleotide sequence ID" value="XM_630447.1"/>
</dbReference>
<dbReference type="FunCoup" id="Q54FK1">
    <property type="interactions" value="68"/>
</dbReference>
<dbReference type="STRING" id="44689.Q54FK1"/>
<dbReference type="PaxDb" id="44689-DDB0266402"/>
<dbReference type="EnsemblProtists" id="EAL62031">
    <property type="protein sequence ID" value="EAL62031"/>
    <property type="gene ID" value="DDB_G0290795"/>
</dbReference>
<dbReference type="GeneID" id="8627837"/>
<dbReference type="KEGG" id="ddi:DDB_G0290795"/>
<dbReference type="dictyBase" id="DDB_G0290795">
    <property type="gene designation" value="hddc2"/>
</dbReference>
<dbReference type="VEuPathDB" id="AmoebaDB:DDB_G0290795"/>
<dbReference type="eggNOG" id="KOG3197">
    <property type="taxonomic scope" value="Eukaryota"/>
</dbReference>
<dbReference type="HOGENOM" id="CLU_039453_2_1_1"/>
<dbReference type="InParanoid" id="Q54FK1"/>
<dbReference type="OMA" id="TWRLCLM"/>
<dbReference type="PhylomeDB" id="Q54FK1"/>
<dbReference type="PRO" id="PR:Q54FK1"/>
<dbReference type="Proteomes" id="UP000002195">
    <property type="component" value="Chromosome 5"/>
</dbReference>
<dbReference type="GO" id="GO:0002953">
    <property type="term" value="F:5'-deoxynucleotidase activity"/>
    <property type="evidence" value="ECO:0000318"/>
    <property type="project" value="GO_Central"/>
</dbReference>
<dbReference type="GO" id="GO:0046872">
    <property type="term" value="F:metal ion binding"/>
    <property type="evidence" value="ECO:0007669"/>
    <property type="project" value="UniProtKB-KW"/>
</dbReference>
<dbReference type="FunFam" id="1.10.3210.10:FF:000011">
    <property type="entry name" value="HD domain-containing protein 2"/>
    <property type="match status" value="1"/>
</dbReference>
<dbReference type="Gene3D" id="1.10.3210.10">
    <property type="entry name" value="Hypothetical protein af1432"/>
    <property type="match status" value="1"/>
</dbReference>
<dbReference type="InterPro" id="IPR003607">
    <property type="entry name" value="HD/PDEase_dom"/>
</dbReference>
<dbReference type="InterPro" id="IPR006674">
    <property type="entry name" value="HD_domain"/>
</dbReference>
<dbReference type="InterPro" id="IPR039356">
    <property type="entry name" value="YfbR/HDDC2"/>
</dbReference>
<dbReference type="PANTHER" id="PTHR11845">
    <property type="entry name" value="5'-DEOXYNUCLEOTIDASE HDDC2"/>
    <property type="match status" value="1"/>
</dbReference>
<dbReference type="PANTHER" id="PTHR11845:SF13">
    <property type="entry name" value="5'-DEOXYNUCLEOTIDASE HDDC2"/>
    <property type="match status" value="1"/>
</dbReference>
<dbReference type="Pfam" id="PF13023">
    <property type="entry name" value="HD_3"/>
    <property type="match status" value="1"/>
</dbReference>
<dbReference type="SMART" id="SM00471">
    <property type="entry name" value="HDc"/>
    <property type="match status" value="1"/>
</dbReference>
<dbReference type="SUPFAM" id="SSF109604">
    <property type="entry name" value="HD-domain/PDEase-like"/>
    <property type="match status" value="1"/>
</dbReference>
<dbReference type="PROSITE" id="PS51831">
    <property type="entry name" value="HD"/>
    <property type="match status" value="1"/>
</dbReference>
<proteinExistence type="inferred from homology"/>